<dbReference type="EMBL" id="CP000529">
    <property type="protein sequence ID" value="ABM35823.1"/>
    <property type="molecule type" value="Genomic_DNA"/>
</dbReference>
<dbReference type="SMR" id="A1VJJ5"/>
<dbReference type="STRING" id="365044.Pnap_0502"/>
<dbReference type="KEGG" id="pna:Pnap_0502"/>
<dbReference type="eggNOG" id="COG0316">
    <property type="taxonomic scope" value="Bacteria"/>
</dbReference>
<dbReference type="HOGENOM" id="CLU_069054_5_3_4"/>
<dbReference type="OrthoDB" id="9801228at2"/>
<dbReference type="Proteomes" id="UP000000644">
    <property type="component" value="Chromosome"/>
</dbReference>
<dbReference type="GO" id="GO:0051537">
    <property type="term" value="F:2 iron, 2 sulfur cluster binding"/>
    <property type="evidence" value="ECO:0007669"/>
    <property type="project" value="TreeGrafter"/>
</dbReference>
<dbReference type="GO" id="GO:0051539">
    <property type="term" value="F:4 iron, 4 sulfur cluster binding"/>
    <property type="evidence" value="ECO:0007669"/>
    <property type="project" value="TreeGrafter"/>
</dbReference>
<dbReference type="GO" id="GO:0005506">
    <property type="term" value="F:iron ion binding"/>
    <property type="evidence" value="ECO:0007669"/>
    <property type="project" value="UniProtKB-UniRule"/>
</dbReference>
<dbReference type="GO" id="GO:0016226">
    <property type="term" value="P:iron-sulfur cluster assembly"/>
    <property type="evidence" value="ECO:0007669"/>
    <property type="project" value="UniProtKB-UniRule"/>
</dbReference>
<dbReference type="FunFam" id="2.60.300.12:FF:000002">
    <property type="entry name" value="Iron-sulfur cluster insertion protein ErpA"/>
    <property type="match status" value="1"/>
</dbReference>
<dbReference type="Gene3D" id="2.60.300.12">
    <property type="entry name" value="HesB-like domain"/>
    <property type="match status" value="1"/>
</dbReference>
<dbReference type="HAMAP" id="MF_01380">
    <property type="entry name" value="Fe_S_insert_ErpA"/>
    <property type="match status" value="1"/>
</dbReference>
<dbReference type="InterPro" id="IPR000361">
    <property type="entry name" value="FeS_biogenesis"/>
</dbReference>
<dbReference type="InterPro" id="IPR016092">
    <property type="entry name" value="FeS_cluster_insertion"/>
</dbReference>
<dbReference type="InterPro" id="IPR017870">
    <property type="entry name" value="FeS_cluster_insertion_CS"/>
</dbReference>
<dbReference type="InterPro" id="IPR023063">
    <property type="entry name" value="FeS_cluster_insertion_RrpA"/>
</dbReference>
<dbReference type="InterPro" id="IPR035903">
    <property type="entry name" value="HesB-like_dom_sf"/>
</dbReference>
<dbReference type="NCBIfam" id="TIGR00049">
    <property type="entry name" value="iron-sulfur cluster assembly accessory protein"/>
    <property type="match status" value="1"/>
</dbReference>
<dbReference type="NCBIfam" id="NF010147">
    <property type="entry name" value="PRK13623.1"/>
    <property type="match status" value="1"/>
</dbReference>
<dbReference type="PANTHER" id="PTHR43011">
    <property type="entry name" value="IRON-SULFUR CLUSTER ASSEMBLY 2 HOMOLOG, MITOCHONDRIAL"/>
    <property type="match status" value="1"/>
</dbReference>
<dbReference type="PANTHER" id="PTHR43011:SF1">
    <property type="entry name" value="IRON-SULFUR CLUSTER ASSEMBLY 2 HOMOLOG, MITOCHONDRIAL"/>
    <property type="match status" value="1"/>
</dbReference>
<dbReference type="Pfam" id="PF01521">
    <property type="entry name" value="Fe-S_biosyn"/>
    <property type="match status" value="1"/>
</dbReference>
<dbReference type="SUPFAM" id="SSF89360">
    <property type="entry name" value="HesB-like domain"/>
    <property type="match status" value="1"/>
</dbReference>
<dbReference type="PROSITE" id="PS01152">
    <property type="entry name" value="HESB"/>
    <property type="match status" value="1"/>
</dbReference>
<proteinExistence type="inferred from homology"/>
<keyword id="KW-0408">Iron</keyword>
<keyword id="KW-0411">Iron-sulfur</keyword>
<keyword id="KW-0479">Metal-binding</keyword>
<keyword id="KW-1185">Reference proteome</keyword>
<sequence length="121" mass="12916">MSAVAENIQTEMPAPFVFTDSAASKVAELIAEEGNPDLKLRVFVQGGGCSGFQYGFTFDEITNEDDTTMTKNGVSLLIDAMSYQYLVGAEIDYKDDLEGAQFVIKNPNASSSCGCGSSFSV</sequence>
<accession>A1VJJ5</accession>
<evidence type="ECO:0000255" key="1">
    <source>
        <dbReference type="HAMAP-Rule" id="MF_01380"/>
    </source>
</evidence>
<feature type="chain" id="PRO_0000311519" description="Putative iron-sulfur cluster insertion protein ErpA 1">
    <location>
        <begin position="1"/>
        <end position="121"/>
    </location>
</feature>
<feature type="binding site" evidence="1">
    <location>
        <position position="49"/>
    </location>
    <ligand>
        <name>iron-sulfur cluster</name>
        <dbReference type="ChEBI" id="CHEBI:30408"/>
    </ligand>
</feature>
<feature type="binding site" evidence="1">
    <location>
        <position position="113"/>
    </location>
    <ligand>
        <name>iron-sulfur cluster</name>
        <dbReference type="ChEBI" id="CHEBI:30408"/>
    </ligand>
</feature>
<feature type="binding site" evidence="1">
    <location>
        <position position="115"/>
    </location>
    <ligand>
        <name>iron-sulfur cluster</name>
        <dbReference type="ChEBI" id="CHEBI:30408"/>
    </ligand>
</feature>
<name>ERPA1_POLNA</name>
<reference key="1">
    <citation type="journal article" date="2009" name="Environ. Microbiol.">
        <title>The genome of Polaromonas naphthalenivorans strain CJ2, isolated from coal tar-contaminated sediment, reveals physiological and metabolic versatility and evolution through extensive horizontal gene transfer.</title>
        <authorList>
            <person name="Yagi J.M."/>
            <person name="Sims D."/>
            <person name="Brettin T."/>
            <person name="Bruce D."/>
            <person name="Madsen E.L."/>
        </authorList>
    </citation>
    <scope>NUCLEOTIDE SEQUENCE [LARGE SCALE GENOMIC DNA]</scope>
    <source>
        <strain>CJ2</strain>
    </source>
</reference>
<gene>
    <name evidence="1" type="primary">erpA1</name>
    <name type="ordered locus">Pnap_0502</name>
</gene>
<organism>
    <name type="scientific">Polaromonas naphthalenivorans (strain CJ2)</name>
    <dbReference type="NCBI Taxonomy" id="365044"/>
    <lineage>
        <taxon>Bacteria</taxon>
        <taxon>Pseudomonadati</taxon>
        <taxon>Pseudomonadota</taxon>
        <taxon>Betaproteobacteria</taxon>
        <taxon>Burkholderiales</taxon>
        <taxon>Comamonadaceae</taxon>
        <taxon>Polaromonas</taxon>
    </lineage>
</organism>
<protein>
    <recommendedName>
        <fullName evidence="1">Putative iron-sulfur cluster insertion protein ErpA 1</fullName>
    </recommendedName>
</protein>
<comment type="function">
    <text evidence="1">Required for insertion of 4Fe-4S clusters.</text>
</comment>
<comment type="cofactor">
    <cofactor evidence="1">
        <name>iron-sulfur cluster</name>
        <dbReference type="ChEBI" id="CHEBI:30408"/>
    </cofactor>
    <text evidence="1">Binds 1 iron-sulfur cluster per subunit.</text>
</comment>
<comment type="subunit">
    <text evidence="1">Homodimer.</text>
</comment>
<comment type="similarity">
    <text evidence="1">Belongs to the HesB/IscA family.</text>
</comment>